<dbReference type="EC" id="2.2.1.1"/>
<dbReference type="EMBL" id="CP000003">
    <property type="protein sequence ID" value="AAT87558.1"/>
    <property type="molecule type" value="Genomic_DNA"/>
</dbReference>
<dbReference type="SMR" id="Q5XAK5"/>
<dbReference type="KEGG" id="spa:M6_Spy1423"/>
<dbReference type="HOGENOM" id="CLU_009227_0_0_9"/>
<dbReference type="Proteomes" id="UP000001167">
    <property type="component" value="Chromosome"/>
</dbReference>
<dbReference type="GO" id="GO:0005829">
    <property type="term" value="C:cytosol"/>
    <property type="evidence" value="ECO:0007669"/>
    <property type="project" value="TreeGrafter"/>
</dbReference>
<dbReference type="GO" id="GO:0046872">
    <property type="term" value="F:metal ion binding"/>
    <property type="evidence" value="ECO:0007669"/>
    <property type="project" value="UniProtKB-KW"/>
</dbReference>
<dbReference type="GO" id="GO:0004802">
    <property type="term" value="F:transketolase activity"/>
    <property type="evidence" value="ECO:0007669"/>
    <property type="project" value="UniProtKB-EC"/>
</dbReference>
<dbReference type="GO" id="GO:0006098">
    <property type="term" value="P:pentose-phosphate shunt"/>
    <property type="evidence" value="ECO:0007669"/>
    <property type="project" value="TreeGrafter"/>
</dbReference>
<dbReference type="CDD" id="cd07033">
    <property type="entry name" value="TPP_PYR_DXS_TK_like"/>
    <property type="match status" value="1"/>
</dbReference>
<dbReference type="CDD" id="cd02012">
    <property type="entry name" value="TPP_TK"/>
    <property type="match status" value="1"/>
</dbReference>
<dbReference type="FunFam" id="3.40.50.920:FF:000003">
    <property type="entry name" value="Transketolase"/>
    <property type="match status" value="1"/>
</dbReference>
<dbReference type="FunFam" id="3.40.50.970:FF:000003">
    <property type="entry name" value="Transketolase"/>
    <property type="match status" value="1"/>
</dbReference>
<dbReference type="FunFam" id="3.40.50.970:FF:000004">
    <property type="entry name" value="Transketolase"/>
    <property type="match status" value="1"/>
</dbReference>
<dbReference type="Gene3D" id="3.40.50.920">
    <property type="match status" value="1"/>
</dbReference>
<dbReference type="Gene3D" id="3.40.50.970">
    <property type="match status" value="2"/>
</dbReference>
<dbReference type="InterPro" id="IPR029061">
    <property type="entry name" value="THDP-binding"/>
</dbReference>
<dbReference type="InterPro" id="IPR009014">
    <property type="entry name" value="Transketo_C/PFOR_II"/>
</dbReference>
<dbReference type="InterPro" id="IPR055152">
    <property type="entry name" value="Transketolase-like_C_2"/>
</dbReference>
<dbReference type="InterPro" id="IPR005475">
    <property type="entry name" value="Transketolase-like_Pyr-bd"/>
</dbReference>
<dbReference type="InterPro" id="IPR005478">
    <property type="entry name" value="Transketolase_bac-like"/>
</dbReference>
<dbReference type="InterPro" id="IPR020826">
    <property type="entry name" value="Transketolase_BS"/>
</dbReference>
<dbReference type="InterPro" id="IPR049557">
    <property type="entry name" value="Transketolase_CS"/>
</dbReference>
<dbReference type="InterPro" id="IPR033247">
    <property type="entry name" value="Transketolase_fam"/>
</dbReference>
<dbReference type="InterPro" id="IPR005474">
    <property type="entry name" value="Transketolase_N"/>
</dbReference>
<dbReference type="NCBIfam" id="TIGR00232">
    <property type="entry name" value="tktlase_bact"/>
    <property type="match status" value="1"/>
</dbReference>
<dbReference type="PANTHER" id="PTHR43522">
    <property type="entry name" value="TRANSKETOLASE"/>
    <property type="match status" value="1"/>
</dbReference>
<dbReference type="PANTHER" id="PTHR43522:SF2">
    <property type="entry name" value="TRANSKETOLASE 1-RELATED"/>
    <property type="match status" value="1"/>
</dbReference>
<dbReference type="Pfam" id="PF02779">
    <property type="entry name" value="Transket_pyr"/>
    <property type="match status" value="1"/>
</dbReference>
<dbReference type="Pfam" id="PF22613">
    <property type="entry name" value="Transketolase_C_1"/>
    <property type="match status" value="1"/>
</dbReference>
<dbReference type="Pfam" id="PF00456">
    <property type="entry name" value="Transketolase_N"/>
    <property type="match status" value="1"/>
</dbReference>
<dbReference type="SMART" id="SM00861">
    <property type="entry name" value="Transket_pyr"/>
    <property type="match status" value="1"/>
</dbReference>
<dbReference type="SUPFAM" id="SSF52518">
    <property type="entry name" value="Thiamin diphosphate-binding fold (THDP-binding)"/>
    <property type="match status" value="2"/>
</dbReference>
<dbReference type="SUPFAM" id="SSF52922">
    <property type="entry name" value="TK C-terminal domain-like"/>
    <property type="match status" value="1"/>
</dbReference>
<dbReference type="PROSITE" id="PS00801">
    <property type="entry name" value="TRANSKETOLASE_1"/>
    <property type="match status" value="1"/>
</dbReference>
<dbReference type="PROSITE" id="PS00802">
    <property type="entry name" value="TRANSKETOLASE_2"/>
    <property type="match status" value="1"/>
</dbReference>
<keyword id="KW-0106">Calcium</keyword>
<keyword id="KW-0903">Direct protein sequencing</keyword>
<keyword id="KW-0460">Magnesium</keyword>
<keyword id="KW-0479">Metal-binding</keyword>
<keyword id="KW-0786">Thiamine pyrophosphate</keyword>
<keyword id="KW-0808">Transferase</keyword>
<comment type="function">
    <text evidence="1">Catalyzes the transfer of a two-carbon ketol group from a ketose donor to an aldose acceptor, via a covalent intermediate with the cofactor thiamine pyrophosphate.</text>
</comment>
<comment type="catalytic activity">
    <reaction evidence="2">
        <text>D-sedoheptulose 7-phosphate + D-glyceraldehyde 3-phosphate = aldehydo-D-ribose 5-phosphate + D-xylulose 5-phosphate</text>
        <dbReference type="Rhea" id="RHEA:10508"/>
        <dbReference type="ChEBI" id="CHEBI:57483"/>
        <dbReference type="ChEBI" id="CHEBI:57737"/>
        <dbReference type="ChEBI" id="CHEBI:58273"/>
        <dbReference type="ChEBI" id="CHEBI:59776"/>
        <dbReference type="EC" id="2.2.1.1"/>
    </reaction>
</comment>
<comment type="cofactor">
    <cofactor evidence="1">
        <name>Mg(2+)</name>
        <dbReference type="ChEBI" id="CHEBI:18420"/>
    </cofactor>
    <cofactor evidence="1">
        <name>Ca(2+)</name>
        <dbReference type="ChEBI" id="CHEBI:29108"/>
    </cofactor>
    <cofactor evidence="1">
        <name>Mn(2+)</name>
        <dbReference type="ChEBI" id="CHEBI:29035"/>
    </cofactor>
    <cofactor evidence="1">
        <name>Co(2+)</name>
        <dbReference type="ChEBI" id="CHEBI:48828"/>
    </cofactor>
    <text evidence="1">Binds 1 Mg(2+) ion per subunit. Can also utilize other divalent metal cations, such as Ca(2+), Mn(2+) and Co(2+).</text>
</comment>
<comment type="cofactor">
    <cofactor evidence="2">
        <name>thiamine diphosphate</name>
        <dbReference type="ChEBI" id="CHEBI:58937"/>
    </cofactor>
    <text evidence="2">Binds 1 thiamine pyrophosphate per subunit.</text>
</comment>
<comment type="subunit">
    <text evidence="1">Homodimer.</text>
</comment>
<comment type="similarity">
    <text evidence="4">Belongs to the transketolase family.</text>
</comment>
<protein>
    <recommendedName>
        <fullName>Transketolase</fullName>
        <shortName>TK</shortName>
        <ecNumber>2.2.1.1</ecNumber>
    </recommendedName>
</protein>
<gene>
    <name evidence="3" type="primary">tkt</name>
    <name type="ordered locus">M6_Spy1423</name>
</gene>
<proteinExistence type="evidence at protein level"/>
<evidence type="ECO:0000250" key="1"/>
<evidence type="ECO:0000250" key="2">
    <source>
        <dbReference type="UniProtKB" id="P23254"/>
    </source>
</evidence>
<evidence type="ECO:0000250" key="3">
    <source>
        <dbReference type="UniProtKB" id="Q9KAD7"/>
    </source>
</evidence>
<evidence type="ECO:0000255" key="4"/>
<evidence type="ECO:0000269" key="5">
    <source ref="2"/>
</evidence>
<evidence type="ECO:0000305" key="6"/>
<evidence type="ECO:0000312" key="7">
    <source>
        <dbReference type="EMBL" id="AAT87558.1"/>
    </source>
</evidence>
<name>TKT_STRP6</name>
<organism>
    <name type="scientific">Streptococcus pyogenes serotype M6 (strain ATCC BAA-946 / MGAS10394)</name>
    <dbReference type="NCBI Taxonomy" id="286636"/>
    <lineage>
        <taxon>Bacteria</taxon>
        <taxon>Bacillati</taxon>
        <taxon>Bacillota</taxon>
        <taxon>Bacilli</taxon>
        <taxon>Lactobacillales</taxon>
        <taxon>Streptococcaceae</taxon>
        <taxon>Streptococcus</taxon>
    </lineage>
</organism>
<sequence length="729" mass="79311">MATVSTGSLIFIVKKNSPMMSKLVFFWQNREKEFRDFGGFSEKSVYFCDTIDNRKRLILVVINREVLLMTFDAIDQLAVNTVRTLSMDAIQAANSGHPGLPMGAAPMAYVLWNHFMNINPKTSRNWSNRDRFILSAGHGSAMLYSLLHLAGYDLSVEDLKNFRQWGSKTPGHPEVNHTDGVEATTGPLGQGIANAVGMAMAEAHLAAKFNKPGFDIVDHYTFALNGDGDLMEGVSQEAASMAGHLKLGKLVLLYDSNDISLDGPTSMAFTEDVKGRFEAYGWQHILVKDGNDLEEIAAAIEAAKAETEKPTIIEVKTIIGFGAEKQGTSAVHGAPLGAEGIAFAKKAYQWTHQDFEVPAEVTERFAQGLQARGEKAEQAWNDLFAAYEAEYPELAAEYQKAFANEAAQVELEAHELGSSMASRVSSQQAIQQISEQVASFWGGSADLSASNNTMVKAETDFQPGHYEGRNVWFGVREFAMAAAMNGIALHGGTRVYGGTFFVFSNYLLPAVRMAALQNLPTVYVMTHDSIAVGEDGPTHEPIEQLASVRSMPNLNVIRPADGNETNAAWKRAIAETDRPTMLVLTRQNLPVLEGTKELAEDGLNKGAYILSEAKGDLEGILIATGSEVKLAMDTQEALEAEGIHVRVVSMPSQNIFDEQSAEYKESILPAAVTKRLAIEAGSSFGWAKYVGLAGKTLTIDTWGASAPGNRIFEEYGFTVANATELYKSL</sequence>
<reference evidence="7" key="1">
    <citation type="journal article" date="2004" name="J. Infect. Dis.">
        <title>Progress toward characterization of the group A Streptococcus metagenome: complete genome sequence of a macrolide-resistant serotype M6 strain.</title>
        <authorList>
            <person name="Banks D.J."/>
            <person name="Porcella S.F."/>
            <person name="Barbian K.D."/>
            <person name="Beres S.B."/>
            <person name="Philips L.E."/>
            <person name="Voyich J.M."/>
            <person name="DeLeo F.R."/>
            <person name="Martin J.M."/>
            <person name="Somerville G.A."/>
            <person name="Musser J.M."/>
        </authorList>
    </citation>
    <scope>NUCLEOTIDE SEQUENCE [LARGE SCALE GENOMIC DNA]</scope>
    <source>
        <strain>ATCC BAA-946 / MGAS10394</strain>
    </source>
</reference>
<reference evidence="6" key="2">
    <citation type="submission" date="2000-05" db="UniProtKB">
        <title>Two-dimensional gel electrophoresis map of Streptococcus pyogenes proteins.</title>
        <authorList>
            <person name="Hogan D.A."/>
            <person name="Du P."/>
            <person name="Stevenson T.I."/>
            <person name="Whitton M."/>
            <person name="Kilby G.W."/>
            <person name="Rogers J."/>
            <person name="VanBogelen R.A."/>
        </authorList>
    </citation>
    <scope>PROTEIN SEQUENCE OF 289-304; 347-364; 376-400; 495-512 AND 696-710</scope>
    <source>
        <strain evidence="5">JRS4 / Serotype M6</strain>
    </source>
</reference>
<accession>Q5XAK5</accession>
<accession>P82578</accession>
<feature type="chain" id="PRO_0000287915" description="Transketolase">
    <location>
        <begin position="1"/>
        <end position="729"/>
    </location>
</feature>
<feature type="active site" description="Proton donor" evidence="1">
    <location>
        <position position="477"/>
    </location>
</feature>
<feature type="binding site" evidence="1">
    <location>
        <position position="97"/>
    </location>
    <ligand>
        <name>substrate</name>
    </ligand>
</feature>
<feature type="binding site" evidence="1">
    <location>
        <position position="138"/>
    </location>
    <ligand>
        <name>thiamine diphosphate</name>
        <dbReference type="ChEBI" id="CHEBI:58937"/>
    </ligand>
</feature>
<feature type="binding site" evidence="1">
    <location>
        <begin position="186"/>
        <end position="188"/>
    </location>
    <ligand>
        <name>thiamine diphosphate</name>
        <dbReference type="ChEBI" id="CHEBI:58937"/>
    </ligand>
</feature>
<feature type="binding site" evidence="1">
    <location>
        <position position="227"/>
    </location>
    <ligand>
        <name>Mg(2+)</name>
        <dbReference type="ChEBI" id="CHEBI:18420"/>
    </ligand>
</feature>
<feature type="binding site" evidence="1">
    <location>
        <position position="228"/>
    </location>
    <ligand>
        <name>thiamine diphosphate</name>
        <dbReference type="ChEBI" id="CHEBI:58937"/>
    </ligand>
</feature>
<feature type="binding site" evidence="1">
    <location>
        <position position="257"/>
    </location>
    <ligand>
        <name>Mg(2+)</name>
        <dbReference type="ChEBI" id="CHEBI:18420"/>
    </ligand>
</feature>
<feature type="binding site" evidence="1">
    <location>
        <position position="257"/>
    </location>
    <ligand>
        <name>thiamine diphosphate</name>
        <dbReference type="ChEBI" id="CHEBI:58937"/>
    </ligand>
</feature>
<feature type="binding site" evidence="1">
    <location>
        <position position="259"/>
    </location>
    <ligand>
        <name>Mg(2+)</name>
        <dbReference type="ChEBI" id="CHEBI:18420"/>
    </ligand>
</feature>
<feature type="binding site" evidence="1">
    <location>
        <position position="332"/>
    </location>
    <ligand>
        <name>substrate</name>
    </ligand>
</feature>
<feature type="binding site" evidence="1">
    <location>
        <position position="332"/>
    </location>
    <ligand>
        <name>thiamine diphosphate</name>
        <dbReference type="ChEBI" id="CHEBI:58937"/>
    </ligand>
</feature>
<feature type="binding site" evidence="1">
    <location>
        <position position="423"/>
    </location>
    <ligand>
        <name>substrate</name>
    </ligand>
</feature>
<feature type="binding site" evidence="1">
    <location>
        <position position="450"/>
    </location>
    <ligand>
        <name>substrate</name>
    </ligand>
</feature>
<feature type="binding site" evidence="1">
    <location>
        <position position="503"/>
    </location>
    <ligand>
        <name>thiamine diphosphate</name>
        <dbReference type="ChEBI" id="CHEBI:58937"/>
    </ligand>
</feature>
<feature type="binding site" evidence="1">
    <location>
        <position position="527"/>
    </location>
    <ligand>
        <name>substrate</name>
    </ligand>
</feature>
<feature type="binding site" evidence="1">
    <location>
        <position position="535"/>
    </location>
    <ligand>
        <name>substrate</name>
    </ligand>
</feature>
<feature type="binding site" evidence="1">
    <location>
        <position position="586"/>
    </location>
    <ligand>
        <name>substrate</name>
    </ligand>
</feature>
<feature type="site" description="Important for catalytic activity" evidence="1">
    <location>
        <position position="97"/>
    </location>
</feature>
<feature type="site" description="Important for catalytic activity" evidence="1">
    <location>
        <position position="332"/>
    </location>
</feature>